<proteinExistence type="inferred from homology"/>
<gene>
    <name type="primary">MZM1</name>
    <name type="ORF">PAAG_01573</name>
</gene>
<protein>
    <recommendedName>
        <fullName>Mitochondrial zinc maintenance protein 1, mitochondrial</fullName>
    </recommendedName>
</protein>
<accession>C1GSS8</accession>
<feature type="transit peptide" description="Mitochondrion" evidence="2">
    <location>
        <begin position="1"/>
        <end status="unknown"/>
    </location>
</feature>
<feature type="chain" id="PRO_0000405502" description="Mitochondrial zinc maintenance protein 1, mitochondrial">
    <location>
        <begin status="unknown"/>
        <end position="124"/>
    </location>
</feature>
<organism>
    <name type="scientific">Paracoccidioides lutzii (strain ATCC MYA-826 / Pb01)</name>
    <name type="common">Paracoccidioides brasiliensis</name>
    <dbReference type="NCBI Taxonomy" id="502779"/>
    <lineage>
        <taxon>Eukaryota</taxon>
        <taxon>Fungi</taxon>
        <taxon>Dikarya</taxon>
        <taxon>Ascomycota</taxon>
        <taxon>Pezizomycotina</taxon>
        <taxon>Eurotiomycetes</taxon>
        <taxon>Eurotiomycetidae</taxon>
        <taxon>Onygenales</taxon>
        <taxon>Ajellomycetaceae</taxon>
        <taxon>Paracoccidioides</taxon>
    </lineage>
</organism>
<dbReference type="EMBL" id="KN293994">
    <property type="protein sequence ID" value="EEH39111.1"/>
    <property type="molecule type" value="Genomic_DNA"/>
</dbReference>
<dbReference type="RefSeq" id="XP_002796565.1">
    <property type="nucleotide sequence ID" value="XM_002796519.2"/>
</dbReference>
<dbReference type="SMR" id="C1GSS8"/>
<dbReference type="STRING" id="502779.C1GSS8"/>
<dbReference type="GeneID" id="9099861"/>
<dbReference type="KEGG" id="pbl:PAAG_01573"/>
<dbReference type="VEuPathDB" id="FungiDB:PAAG_01573"/>
<dbReference type="eggNOG" id="ENOG502S6EF">
    <property type="taxonomic scope" value="Eukaryota"/>
</dbReference>
<dbReference type="HOGENOM" id="CLU_147114_2_2_1"/>
<dbReference type="OMA" id="KYKLRIH"/>
<dbReference type="OrthoDB" id="529194at2759"/>
<dbReference type="Proteomes" id="UP000002059">
    <property type="component" value="Partially assembled WGS sequence"/>
</dbReference>
<dbReference type="GO" id="GO:0005759">
    <property type="term" value="C:mitochondrial matrix"/>
    <property type="evidence" value="ECO:0007669"/>
    <property type="project" value="UniProtKB-SubCell"/>
</dbReference>
<dbReference type="GO" id="GO:0044183">
    <property type="term" value="F:protein folding chaperone"/>
    <property type="evidence" value="ECO:0007669"/>
    <property type="project" value="TreeGrafter"/>
</dbReference>
<dbReference type="GO" id="GO:0034551">
    <property type="term" value="P:mitochondrial respiratory chain complex III assembly"/>
    <property type="evidence" value="ECO:0007669"/>
    <property type="project" value="InterPro"/>
</dbReference>
<dbReference type="CDD" id="cd20267">
    <property type="entry name" value="Complex1_LYR_LYRM7"/>
    <property type="match status" value="1"/>
</dbReference>
<dbReference type="InterPro" id="IPR008011">
    <property type="entry name" value="Complex1_LYR_dom"/>
</dbReference>
<dbReference type="InterPro" id="IPR045298">
    <property type="entry name" value="Complex1_LYR_LYRM7"/>
</dbReference>
<dbReference type="InterPro" id="IPR050435">
    <property type="entry name" value="MZM1/LYRM7"/>
</dbReference>
<dbReference type="PANTHER" id="PTHR46749">
    <property type="entry name" value="COMPLEX III ASSEMBLY FACTOR LYRM7"/>
    <property type="match status" value="1"/>
</dbReference>
<dbReference type="PANTHER" id="PTHR46749:SF1">
    <property type="entry name" value="COMPLEX III ASSEMBLY FACTOR LYRM7"/>
    <property type="match status" value="1"/>
</dbReference>
<dbReference type="Pfam" id="PF05347">
    <property type="entry name" value="Complex1_LYR"/>
    <property type="match status" value="1"/>
</dbReference>
<evidence type="ECO:0000250" key="1"/>
<evidence type="ECO:0000255" key="2"/>
<evidence type="ECO:0000305" key="3"/>
<comment type="function">
    <text evidence="1">Assembly factor required for Rieske Fe-S protein RIP1 incorporation into the cytochrome b-c1 (CIII) complex. Functions as a chaperone, binding to this subunit within the mitochondrial matrix and stabilizing it prior to its translocation and insertion into the late CIII dimeric intermediate within the mitochondrial inner membrane. Modulates the mitochondrial matrix zinc pool (By similarity).</text>
</comment>
<comment type="subunit">
    <text evidence="1">Interacts with RIP1.</text>
</comment>
<comment type="subcellular location">
    <subcellularLocation>
        <location evidence="1">Mitochondrion matrix</location>
    </subcellularLocation>
</comment>
<comment type="similarity">
    <text evidence="3">Belongs to the complex I LYR family. MZM1 subfamily.</text>
</comment>
<reference key="1">
    <citation type="journal article" date="2011" name="PLoS Genet.">
        <title>Comparative genomic analysis of human fungal pathogens causing paracoccidioidomycosis.</title>
        <authorList>
            <person name="Desjardins C.A."/>
            <person name="Champion M.D."/>
            <person name="Holder J.W."/>
            <person name="Muszewska A."/>
            <person name="Goldberg J."/>
            <person name="Bailao A.M."/>
            <person name="Brigido M.M."/>
            <person name="Ferreira M.E."/>
            <person name="Garcia A.M."/>
            <person name="Grynberg M."/>
            <person name="Gujja S."/>
            <person name="Heiman D.I."/>
            <person name="Henn M.R."/>
            <person name="Kodira C.D."/>
            <person name="Leon-Narvaez H."/>
            <person name="Longo L.V.G."/>
            <person name="Ma L.-J."/>
            <person name="Malavazi I."/>
            <person name="Matsuo A.L."/>
            <person name="Morais F.V."/>
            <person name="Pereira M."/>
            <person name="Rodriguez-Brito S."/>
            <person name="Sakthikumar S."/>
            <person name="Salem-Izacc S.M."/>
            <person name="Sykes S.M."/>
            <person name="Teixeira M.M."/>
            <person name="Vallejo M.C."/>
            <person name="Walter M.E."/>
            <person name="Yandava C."/>
            <person name="Young S."/>
            <person name="Zeng Q."/>
            <person name="Zucker J."/>
            <person name="Felipe M.S."/>
            <person name="Goldman G.H."/>
            <person name="Haas B.J."/>
            <person name="McEwen J.G."/>
            <person name="Nino-Vega G."/>
            <person name="Puccia R."/>
            <person name="San-Blas G."/>
            <person name="Soares C.M."/>
            <person name="Birren B.W."/>
            <person name="Cuomo C.A."/>
        </authorList>
    </citation>
    <scope>NUCLEOTIDE SEQUENCE [LARGE SCALE GENOMIC DNA]</scope>
    <source>
        <strain>ATCC MYA-826 / Pb01</strain>
    </source>
</reference>
<keyword id="KW-0143">Chaperone</keyword>
<keyword id="KW-0496">Mitochondrion</keyword>
<keyword id="KW-1185">Reference proteome</keyword>
<keyword id="KW-0809">Transit peptide</keyword>
<sequence length="124" mass="13742">MATTPLPNALSAYRLLLRATRIAFQGDFTTLHAARAEARKHFDQNRRLGVDTPKHIQHAVETAEILRTNVVQGVRVEGSGEAGKGEERYELRIHEHIERGDNDTIKTAGNKRIKAAVGKTCSQS</sequence>
<name>MZM1_PARBA</name>